<protein>
    <recommendedName>
        <fullName evidence="1">Glycine dehydrogenase (decarboxylating)</fullName>
        <ecNumber evidence="1">1.4.4.2</ecNumber>
    </recommendedName>
    <alternativeName>
        <fullName evidence="1">Glycine cleavage system P-protein</fullName>
    </alternativeName>
    <alternativeName>
        <fullName evidence="1">Glycine decarboxylase</fullName>
    </alternativeName>
    <alternativeName>
        <fullName evidence="1">Glycine dehydrogenase (aminomethyl-transferring)</fullName>
    </alternativeName>
</protein>
<organism>
    <name type="scientific">Neisseria gonorrhoeae (strain ATCC 700825 / FA 1090)</name>
    <dbReference type="NCBI Taxonomy" id="242231"/>
    <lineage>
        <taxon>Bacteria</taxon>
        <taxon>Pseudomonadati</taxon>
        <taxon>Pseudomonadota</taxon>
        <taxon>Betaproteobacteria</taxon>
        <taxon>Neisseriales</taxon>
        <taxon>Neisseriaceae</taxon>
        <taxon>Neisseria</taxon>
    </lineage>
</organism>
<proteinExistence type="inferred from homology"/>
<name>GCSP_NEIG1</name>
<sequence>MKLSELFNPNEFAARHLSFGDEAALLAAVGEKSMDEFVGNTLPQSIRMPSELDLPEALTEADALAKLKGIASKNVINKSYIGLGYYPTRVPNVILRNVLENPGWYTAYTPYQAEIAQGRLEALLNFQQVCIDLTGFPVAGASLLDEATAAAEAMAMAHRVGKVKSERFFVDARVYPQTLDVMKTRAKYFGFELVVSDFAQADEGEYFGALFQYVGKDGDVQDLQDVIGRLKAKGTIVAVAADIMSLVLLKSPAELGADIALGNTQRFGVPMGFGGPHAAYFAFKDEFKRSAPGRIIGVSKDASGKPALRMALSTREQHIRREKATSNICTAQALLANLAGMYAVYHGPKGVKRIANRIHTLASVFADALVSDGLKVVHEVFFDTVTVDFGSKEKADQVFAAALESGYNLRSVNNTQVAAAFHETSVYEDLADLYRAFTGKDTFTFADDVKGRLNAELLRQDDILQHPVYNSYHTEHEMLRYLKKLEDRDLAMNRSMISLGSCTMKLNATAEMLPITWTEFSDIHPYAPEAQTAGYRELLADMENSLKAITGFDAISFQPNSGAQGEYSGMLAIRRYQEAQGEAHRNICLIPKSAHGTNPATAAMLGLKVVVVDTDEHGNVNIDDLKAKAEQHRDALSAIMITYPSTHGVYEEGIRDICRIIHENGGQVYMDGANLNAQIGIMQPAEVGADVLHMNLHKTFCIPHGGGGPGMGPIGLKAHLAPFAPGHTLTDTHSASAGQTSVAAAAFGSASILPITWMYLTMMGKQGMEQATRWALLNANYVAKRLSEDYPILYTGKNGRIAHECIVDLRPLKAESGITETDIAKRLMDYGFHAPTVSFPVAGTLMIEPTESESKAELDRFIAALKSIRREVQKVIDGEWPKDDNPLVNAPHTAADITGEWAHPYSREEAVFPLPFVREHKFWPFVNRVDDVYGDRNLVCSCPPMENYED</sequence>
<comment type="function">
    <text evidence="1">The glycine cleavage system catalyzes the degradation of glycine. The P protein binds the alpha-amino group of glycine through its pyridoxal phosphate cofactor; CO(2) is released and the remaining methylamine moiety is then transferred to the lipoamide cofactor of the H protein.</text>
</comment>
<comment type="catalytic activity">
    <reaction evidence="1">
        <text>N(6)-[(R)-lipoyl]-L-lysyl-[glycine-cleavage complex H protein] + glycine + H(+) = N(6)-[(R)-S(8)-aminomethyldihydrolipoyl]-L-lysyl-[glycine-cleavage complex H protein] + CO2</text>
        <dbReference type="Rhea" id="RHEA:24304"/>
        <dbReference type="Rhea" id="RHEA-COMP:10494"/>
        <dbReference type="Rhea" id="RHEA-COMP:10495"/>
        <dbReference type="ChEBI" id="CHEBI:15378"/>
        <dbReference type="ChEBI" id="CHEBI:16526"/>
        <dbReference type="ChEBI" id="CHEBI:57305"/>
        <dbReference type="ChEBI" id="CHEBI:83099"/>
        <dbReference type="ChEBI" id="CHEBI:83143"/>
        <dbReference type="EC" id="1.4.4.2"/>
    </reaction>
</comment>
<comment type="cofactor">
    <cofactor evidence="1">
        <name>pyridoxal 5'-phosphate</name>
        <dbReference type="ChEBI" id="CHEBI:597326"/>
    </cofactor>
</comment>
<comment type="subunit">
    <text evidence="1">The glycine cleavage system is composed of four proteins: P, T, L and H.</text>
</comment>
<comment type="similarity">
    <text evidence="1">Belongs to the GcvP family.</text>
</comment>
<feature type="chain" id="PRO_0000227108" description="Glycine dehydrogenase (decarboxylating)">
    <location>
        <begin position="1"/>
        <end position="950"/>
    </location>
</feature>
<feature type="modified residue" description="N6-(pyridoxal phosphate)lysine" evidence="1">
    <location>
        <position position="698"/>
    </location>
</feature>
<gene>
    <name evidence="1" type="primary">gcvP</name>
    <name type="ordered locus">NGO_1325</name>
</gene>
<keyword id="KW-0560">Oxidoreductase</keyword>
<keyword id="KW-0663">Pyridoxal phosphate</keyword>
<keyword id="KW-1185">Reference proteome</keyword>
<dbReference type="EC" id="1.4.4.2" evidence="1"/>
<dbReference type="EMBL" id="AE004969">
    <property type="protein sequence ID" value="AAW89976.1"/>
    <property type="molecule type" value="Genomic_DNA"/>
</dbReference>
<dbReference type="RefSeq" id="WP_003705868.1">
    <property type="nucleotide sequence ID" value="NC_002946.2"/>
</dbReference>
<dbReference type="RefSeq" id="YP_208388.1">
    <property type="nucleotide sequence ID" value="NC_002946.2"/>
</dbReference>
<dbReference type="SMR" id="Q5F761"/>
<dbReference type="STRING" id="242231.NGO_1325"/>
<dbReference type="KEGG" id="ngo:NGO_1325"/>
<dbReference type="PATRIC" id="fig|242231.10.peg.1559"/>
<dbReference type="HOGENOM" id="CLU_004620_3_2_4"/>
<dbReference type="Proteomes" id="UP000000535">
    <property type="component" value="Chromosome"/>
</dbReference>
<dbReference type="GO" id="GO:0005829">
    <property type="term" value="C:cytosol"/>
    <property type="evidence" value="ECO:0007669"/>
    <property type="project" value="TreeGrafter"/>
</dbReference>
<dbReference type="GO" id="GO:0005960">
    <property type="term" value="C:glycine cleavage complex"/>
    <property type="evidence" value="ECO:0007669"/>
    <property type="project" value="TreeGrafter"/>
</dbReference>
<dbReference type="GO" id="GO:0016594">
    <property type="term" value="F:glycine binding"/>
    <property type="evidence" value="ECO:0007669"/>
    <property type="project" value="TreeGrafter"/>
</dbReference>
<dbReference type="GO" id="GO:0004375">
    <property type="term" value="F:glycine dehydrogenase (decarboxylating) activity"/>
    <property type="evidence" value="ECO:0007669"/>
    <property type="project" value="UniProtKB-EC"/>
</dbReference>
<dbReference type="GO" id="GO:0030170">
    <property type="term" value="F:pyridoxal phosphate binding"/>
    <property type="evidence" value="ECO:0007669"/>
    <property type="project" value="TreeGrafter"/>
</dbReference>
<dbReference type="GO" id="GO:0019464">
    <property type="term" value="P:glycine decarboxylation via glycine cleavage system"/>
    <property type="evidence" value="ECO:0007669"/>
    <property type="project" value="UniProtKB-UniRule"/>
</dbReference>
<dbReference type="FunFam" id="3.40.640.10:FF:000005">
    <property type="entry name" value="Glycine dehydrogenase (decarboxylating), mitochondrial"/>
    <property type="match status" value="1"/>
</dbReference>
<dbReference type="FunFam" id="3.90.1150.10:FF:000007">
    <property type="entry name" value="Glycine dehydrogenase (decarboxylating), mitochondrial"/>
    <property type="match status" value="1"/>
</dbReference>
<dbReference type="FunFam" id="3.40.640.10:FF:000007">
    <property type="entry name" value="glycine dehydrogenase (Decarboxylating), mitochondrial"/>
    <property type="match status" value="1"/>
</dbReference>
<dbReference type="Gene3D" id="3.90.1150.10">
    <property type="entry name" value="Aspartate Aminotransferase, domain 1"/>
    <property type="match status" value="2"/>
</dbReference>
<dbReference type="Gene3D" id="3.40.640.10">
    <property type="entry name" value="Type I PLP-dependent aspartate aminotransferase-like (Major domain)"/>
    <property type="match status" value="2"/>
</dbReference>
<dbReference type="HAMAP" id="MF_00711">
    <property type="entry name" value="GcvP"/>
    <property type="match status" value="1"/>
</dbReference>
<dbReference type="InterPro" id="IPR003437">
    <property type="entry name" value="GcvP"/>
</dbReference>
<dbReference type="InterPro" id="IPR049316">
    <property type="entry name" value="GDC-P_C"/>
</dbReference>
<dbReference type="InterPro" id="IPR049315">
    <property type="entry name" value="GDC-P_N"/>
</dbReference>
<dbReference type="InterPro" id="IPR020581">
    <property type="entry name" value="GDC_P"/>
</dbReference>
<dbReference type="InterPro" id="IPR015424">
    <property type="entry name" value="PyrdxlP-dep_Trfase"/>
</dbReference>
<dbReference type="InterPro" id="IPR015421">
    <property type="entry name" value="PyrdxlP-dep_Trfase_major"/>
</dbReference>
<dbReference type="InterPro" id="IPR015422">
    <property type="entry name" value="PyrdxlP-dep_Trfase_small"/>
</dbReference>
<dbReference type="NCBIfam" id="TIGR00461">
    <property type="entry name" value="gcvP"/>
    <property type="match status" value="1"/>
</dbReference>
<dbReference type="NCBIfam" id="NF003346">
    <property type="entry name" value="PRK04366.1"/>
    <property type="match status" value="1"/>
</dbReference>
<dbReference type="PANTHER" id="PTHR11773:SF13">
    <property type="entry name" value="GLYCINE DEHYDROGENASE (DECARBOXYLATING)"/>
    <property type="match status" value="1"/>
</dbReference>
<dbReference type="PANTHER" id="PTHR11773">
    <property type="entry name" value="GLYCINE DEHYDROGENASE, DECARBOXYLATING"/>
    <property type="match status" value="1"/>
</dbReference>
<dbReference type="Pfam" id="PF21478">
    <property type="entry name" value="GcvP2_C"/>
    <property type="match status" value="1"/>
</dbReference>
<dbReference type="Pfam" id="PF02347">
    <property type="entry name" value="GDC-P"/>
    <property type="match status" value="2"/>
</dbReference>
<dbReference type="SUPFAM" id="SSF53383">
    <property type="entry name" value="PLP-dependent transferases"/>
    <property type="match status" value="2"/>
</dbReference>
<reference key="1">
    <citation type="submission" date="2003-03" db="EMBL/GenBank/DDBJ databases">
        <title>The complete genome sequence of Neisseria gonorrhoeae.</title>
        <authorList>
            <person name="Lewis L.A."/>
            <person name="Gillaspy A.F."/>
            <person name="McLaughlin R.E."/>
            <person name="Gipson M."/>
            <person name="Ducey T.F."/>
            <person name="Ownbey T."/>
            <person name="Hartman K."/>
            <person name="Nydick C."/>
            <person name="Carson M.B."/>
            <person name="Vaughn J."/>
            <person name="Thomson C."/>
            <person name="Song L."/>
            <person name="Lin S."/>
            <person name="Yuan X."/>
            <person name="Najar F."/>
            <person name="Zhan M."/>
            <person name="Ren Q."/>
            <person name="Zhu H."/>
            <person name="Qi S."/>
            <person name="Kenton S.M."/>
            <person name="Lai H."/>
            <person name="White J.D."/>
            <person name="Clifton S."/>
            <person name="Roe B.A."/>
            <person name="Dyer D.W."/>
        </authorList>
    </citation>
    <scope>NUCLEOTIDE SEQUENCE [LARGE SCALE GENOMIC DNA]</scope>
    <source>
        <strain>ATCC 700825 / FA 1090</strain>
    </source>
</reference>
<evidence type="ECO:0000255" key="1">
    <source>
        <dbReference type="HAMAP-Rule" id="MF_00711"/>
    </source>
</evidence>
<accession>Q5F761</accession>